<accession>Q2A5G8</accession>
<evidence type="ECO:0000255" key="1">
    <source>
        <dbReference type="HAMAP-Rule" id="MF_01369"/>
    </source>
</evidence>
<evidence type="ECO:0000305" key="2"/>
<gene>
    <name evidence="1" type="primary">rplW</name>
    <name type="ordered locus">FTL_0238</name>
</gene>
<protein>
    <recommendedName>
        <fullName evidence="1">Large ribosomal subunit protein uL23</fullName>
    </recommendedName>
    <alternativeName>
        <fullName evidence="2">50S ribosomal protein L23</fullName>
    </alternativeName>
</protein>
<organism>
    <name type="scientific">Francisella tularensis subsp. holarctica (strain LVS)</name>
    <dbReference type="NCBI Taxonomy" id="376619"/>
    <lineage>
        <taxon>Bacteria</taxon>
        <taxon>Pseudomonadati</taxon>
        <taxon>Pseudomonadota</taxon>
        <taxon>Gammaproteobacteria</taxon>
        <taxon>Thiotrichales</taxon>
        <taxon>Francisellaceae</taxon>
        <taxon>Francisella</taxon>
    </lineage>
</organism>
<sequence>MSSQEKLLKTVIRPHVSDKTYGLSDANSTIVFEVARFANKQDVKNAVEKLFEVKVESVNILNVKGKARRFGRVEGRTKAWKKAYVKLAEGHDINFVGAE</sequence>
<name>RL23_FRATH</name>
<reference key="1">
    <citation type="submission" date="2006-03" db="EMBL/GenBank/DDBJ databases">
        <title>Complete genome sequence of Francisella tularensis LVS (Live Vaccine Strain).</title>
        <authorList>
            <person name="Chain P."/>
            <person name="Larimer F."/>
            <person name="Land M."/>
            <person name="Stilwagen S."/>
            <person name="Larsson P."/>
            <person name="Bearden S."/>
            <person name="Chu M."/>
            <person name="Oyston P."/>
            <person name="Forsman M."/>
            <person name="Andersson S."/>
            <person name="Lindler L."/>
            <person name="Titball R."/>
            <person name="Garcia E."/>
        </authorList>
    </citation>
    <scope>NUCLEOTIDE SEQUENCE [LARGE SCALE GENOMIC DNA]</scope>
    <source>
        <strain>LVS</strain>
    </source>
</reference>
<feature type="chain" id="PRO_0000272746" description="Large ribosomal subunit protein uL23">
    <location>
        <begin position="1"/>
        <end position="99"/>
    </location>
</feature>
<dbReference type="EMBL" id="AM233362">
    <property type="protein sequence ID" value="CAJ78679.1"/>
    <property type="molecule type" value="Genomic_DNA"/>
</dbReference>
<dbReference type="RefSeq" id="WP_003027200.1">
    <property type="nucleotide sequence ID" value="NZ_CP009694.1"/>
</dbReference>
<dbReference type="SMR" id="Q2A5G8"/>
<dbReference type="GeneID" id="75264259"/>
<dbReference type="KEGG" id="ftl:FTL_0238"/>
<dbReference type="Proteomes" id="UP000001944">
    <property type="component" value="Chromosome"/>
</dbReference>
<dbReference type="GO" id="GO:1990904">
    <property type="term" value="C:ribonucleoprotein complex"/>
    <property type="evidence" value="ECO:0007669"/>
    <property type="project" value="UniProtKB-KW"/>
</dbReference>
<dbReference type="GO" id="GO:0005840">
    <property type="term" value="C:ribosome"/>
    <property type="evidence" value="ECO:0007669"/>
    <property type="project" value="UniProtKB-KW"/>
</dbReference>
<dbReference type="GO" id="GO:0019843">
    <property type="term" value="F:rRNA binding"/>
    <property type="evidence" value="ECO:0007669"/>
    <property type="project" value="UniProtKB-UniRule"/>
</dbReference>
<dbReference type="GO" id="GO:0003735">
    <property type="term" value="F:structural constituent of ribosome"/>
    <property type="evidence" value="ECO:0007669"/>
    <property type="project" value="InterPro"/>
</dbReference>
<dbReference type="GO" id="GO:0006412">
    <property type="term" value="P:translation"/>
    <property type="evidence" value="ECO:0007669"/>
    <property type="project" value="UniProtKB-UniRule"/>
</dbReference>
<dbReference type="FunFam" id="3.30.70.330:FF:000001">
    <property type="entry name" value="50S ribosomal protein L23"/>
    <property type="match status" value="1"/>
</dbReference>
<dbReference type="Gene3D" id="3.30.70.330">
    <property type="match status" value="1"/>
</dbReference>
<dbReference type="HAMAP" id="MF_01369_B">
    <property type="entry name" value="Ribosomal_uL23_B"/>
    <property type="match status" value="1"/>
</dbReference>
<dbReference type="InterPro" id="IPR012677">
    <property type="entry name" value="Nucleotide-bd_a/b_plait_sf"/>
</dbReference>
<dbReference type="InterPro" id="IPR013025">
    <property type="entry name" value="Ribosomal_uL23-like"/>
</dbReference>
<dbReference type="InterPro" id="IPR012678">
    <property type="entry name" value="Ribosomal_uL23/eL15/eS24_sf"/>
</dbReference>
<dbReference type="InterPro" id="IPR001014">
    <property type="entry name" value="Ribosomal_uL23_CS"/>
</dbReference>
<dbReference type="NCBIfam" id="NF004359">
    <property type="entry name" value="PRK05738.1-3"/>
    <property type="match status" value="1"/>
</dbReference>
<dbReference type="NCBIfam" id="NF004363">
    <property type="entry name" value="PRK05738.2-4"/>
    <property type="match status" value="1"/>
</dbReference>
<dbReference type="PANTHER" id="PTHR11620">
    <property type="entry name" value="60S RIBOSOMAL PROTEIN L23A"/>
    <property type="match status" value="1"/>
</dbReference>
<dbReference type="Pfam" id="PF00276">
    <property type="entry name" value="Ribosomal_L23"/>
    <property type="match status" value="1"/>
</dbReference>
<dbReference type="SUPFAM" id="SSF54189">
    <property type="entry name" value="Ribosomal proteins S24e, L23 and L15e"/>
    <property type="match status" value="1"/>
</dbReference>
<dbReference type="PROSITE" id="PS00050">
    <property type="entry name" value="RIBOSOMAL_L23"/>
    <property type="match status" value="1"/>
</dbReference>
<keyword id="KW-1185">Reference proteome</keyword>
<keyword id="KW-0687">Ribonucleoprotein</keyword>
<keyword id="KW-0689">Ribosomal protein</keyword>
<keyword id="KW-0694">RNA-binding</keyword>
<keyword id="KW-0699">rRNA-binding</keyword>
<proteinExistence type="inferred from homology"/>
<comment type="function">
    <text evidence="1">One of the early assembly proteins it binds 23S rRNA. One of the proteins that surrounds the polypeptide exit tunnel on the outside of the ribosome. Forms the main docking site for trigger factor binding to the ribosome.</text>
</comment>
<comment type="subunit">
    <text evidence="1">Part of the 50S ribosomal subunit. Contacts protein L29, and trigger factor when it is bound to the ribosome.</text>
</comment>
<comment type="similarity">
    <text evidence="1">Belongs to the universal ribosomal protein uL23 family.</text>
</comment>